<evidence type="ECO:0000255" key="1">
    <source>
        <dbReference type="HAMAP-Rule" id="MF_01587"/>
    </source>
</evidence>
<accession>A6TFP6</accession>
<feature type="chain" id="PRO_0000313542" description="DNA ligase B">
    <location>
        <begin position="1"/>
        <end position="564"/>
    </location>
</feature>
<feature type="active site" description="N6-AMP-lysine intermediate" evidence="1">
    <location>
        <position position="130"/>
    </location>
</feature>
<dbReference type="EC" id="6.5.1.2" evidence="1"/>
<dbReference type="EMBL" id="CP000647">
    <property type="protein sequence ID" value="ABR79380.1"/>
    <property type="molecule type" value="Genomic_DNA"/>
</dbReference>
<dbReference type="SMR" id="A6TFP6"/>
<dbReference type="STRING" id="272620.KPN_03995"/>
<dbReference type="PaxDb" id="272620-KPN_03995"/>
<dbReference type="EnsemblBacteria" id="ABR79380">
    <property type="protein sequence ID" value="ABR79380"/>
    <property type="gene ID" value="KPN_03995"/>
</dbReference>
<dbReference type="KEGG" id="kpn:KPN_03995"/>
<dbReference type="HOGENOM" id="CLU_489786_0_0_6"/>
<dbReference type="Proteomes" id="UP000000265">
    <property type="component" value="Chromosome"/>
</dbReference>
<dbReference type="GO" id="GO:0003911">
    <property type="term" value="F:DNA ligase (NAD+) activity"/>
    <property type="evidence" value="ECO:0007669"/>
    <property type="project" value="UniProtKB-UniRule"/>
</dbReference>
<dbReference type="GO" id="GO:0006281">
    <property type="term" value="P:DNA repair"/>
    <property type="evidence" value="ECO:0007669"/>
    <property type="project" value="UniProtKB-KW"/>
</dbReference>
<dbReference type="GO" id="GO:0006260">
    <property type="term" value="P:DNA replication"/>
    <property type="evidence" value="ECO:0007669"/>
    <property type="project" value="UniProtKB-KW"/>
</dbReference>
<dbReference type="Gene3D" id="3.30.470.30">
    <property type="entry name" value="DNA ligase/mRNA capping enzyme"/>
    <property type="match status" value="1"/>
</dbReference>
<dbReference type="Gene3D" id="1.10.287.610">
    <property type="entry name" value="Helix hairpin bin"/>
    <property type="match status" value="1"/>
</dbReference>
<dbReference type="Gene3D" id="2.40.50.140">
    <property type="entry name" value="Nucleic acid-binding proteins"/>
    <property type="match status" value="1"/>
</dbReference>
<dbReference type="HAMAP" id="MF_01587">
    <property type="entry name" value="DNA_ligase_B"/>
    <property type="match status" value="1"/>
</dbReference>
<dbReference type="InterPro" id="IPR020923">
    <property type="entry name" value="DNA_ligase_B"/>
</dbReference>
<dbReference type="InterPro" id="IPR013839">
    <property type="entry name" value="DNAligase_adenylation"/>
</dbReference>
<dbReference type="InterPro" id="IPR013840">
    <property type="entry name" value="DNAligase_N"/>
</dbReference>
<dbReference type="InterPro" id="IPR012340">
    <property type="entry name" value="NA-bd_OB-fold"/>
</dbReference>
<dbReference type="InterPro" id="IPR050326">
    <property type="entry name" value="NAD_dep_DNA_ligaseB"/>
</dbReference>
<dbReference type="InterPro" id="IPR004150">
    <property type="entry name" value="NAD_DNA_ligase_OB"/>
</dbReference>
<dbReference type="InterPro" id="IPR010994">
    <property type="entry name" value="RuvA_2-like"/>
</dbReference>
<dbReference type="NCBIfam" id="NF005987">
    <property type="entry name" value="PRK08097.1"/>
    <property type="match status" value="1"/>
</dbReference>
<dbReference type="PANTHER" id="PTHR47810">
    <property type="entry name" value="DNA LIGASE"/>
    <property type="match status" value="1"/>
</dbReference>
<dbReference type="PANTHER" id="PTHR47810:SF1">
    <property type="entry name" value="DNA LIGASE B"/>
    <property type="match status" value="1"/>
</dbReference>
<dbReference type="Pfam" id="PF01653">
    <property type="entry name" value="DNA_ligase_aden"/>
    <property type="match status" value="1"/>
</dbReference>
<dbReference type="Pfam" id="PF03120">
    <property type="entry name" value="DNA_ligase_OB"/>
    <property type="match status" value="1"/>
</dbReference>
<dbReference type="SMART" id="SM00532">
    <property type="entry name" value="LIGANc"/>
    <property type="match status" value="1"/>
</dbReference>
<dbReference type="SUPFAM" id="SSF56091">
    <property type="entry name" value="DNA ligase/mRNA capping enzyme, catalytic domain"/>
    <property type="match status" value="1"/>
</dbReference>
<dbReference type="SUPFAM" id="SSF50249">
    <property type="entry name" value="Nucleic acid-binding proteins"/>
    <property type="match status" value="1"/>
</dbReference>
<dbReference type="SUPFAM" id="SSF47781">
    <property type="entry name" value="RuvA domain 2-like"/>
    <property type="match status" value="1"/>
</dbReference>
<comment type="function">
    <text evidence="1">Catalyzes the formation of phosphodiester linkages between 5'-phosphoryl and 3'-hydroxyl groups in double-stranded DNA using NAD as a coenzyme and as the energy source for the reaction.</text>
</comment>
<comment type="catalytic activity">
    <reaction evidence="1">
        <text>NAD(+) + (deoxyribonucleotide)n-3'-hydroxyl + 5'-phospho-(deoxyribonucleotide)m = (deoxyribonucleotide)n+m + AMP + beta-nicotinamide D-nucleotide.</text>
        <dbReference type="EC" id="6.5.1.2"/>
    </reaction>
</comment>
<comment type="similarity">
    <text evidence="1">Belongs to the NAD-dependent DNA ligase family. LigB subfamily.</text>
</comment>
<reference key="1">
    <citation type="submission" date="2006-09" db="EMBL/GenBank/DDBJ databases">
        <authorList>
            <consortium name="The Klebsiella pneumonia Genome Sequencing Project"/>
            <person name="McClelland M."/>
            <person name="Sanderson E.K."/>
            <person name="Spieth J."/>
            <person name="Clifton W.S."/>
            <person name="Latreille P."/>
            <person name="Sabo A."/>
            <person name="Pepin K."/>
            <person name="Bhonagiri V."/>
            <person name="Porwollik S."/>
            <person name="Ali J."/>
            <person name="Wilson R.K."/>
        </authorList>
    </citation>
    <scope>NUCLEOTIDE SEQUENCE [LARGE SCALE GENOMIC DNA]</scope>
    <source>
        <strain>ATCC 700721 / MGH 78578</strain>
    </source>
</reference>
<gene>
    <name evidence="1" type="primary">ligB</name>
    <name type="ordered locus">KPN78578_39560</name>
    <name type="ORF">KPN_03995</name>
</gene>
<sequence length="564" mass="63311">MEEGTAMRKGGWWLALGMFSASALATCPDWPLARGRQETSRLHQQIVAWKEAYWRQGASGVSDDVYDQLTLRLAQWRQCFPGATPEDDDLPPPTGDARHPVAHTGVRKLADEDSVARWMKNKSDLWIQPKVDGVAVTLVYRQGRLVQAISRGDGLRGEAWTARARQIPALAKVMTGELADSVLQGELFLRRDGHVQQQTGGMNARAKVAGLMMRADAAAALSQLDVFIWAWPDGPSDMRRRQQLLAQAGFKYSGQYTHPVSRIEQVAQWRQRWYRSPLPFVSDGVIVREGREPPGRVWSPGKGEWLAAWKYPPASRVMQVRAIRFSIGRSGRLNVVAELEPQRLDDKRVQRVNVGSVSRWQMLDIGVGDQLQISLAGQGIPRVDAVVWRTAERHKPTPPPAKFNALTCYFATPECSEQFLSRLIWLSSKSALNVDGVGENLWRVIQQQNPMTHIFSWLALTVEQLQAVPGISAARGQHLWHQFDLVRKRPFIRWVLAMGIPVPQGALAQLESENWHLLAAKSEAQWRTLPGVGEIRARQLVAFLHHPDVVALAQWLSGQRIPGF</sequence>
<organism>
    <name type="scientific">Klebsiella pneumoniae subsp. pneumoniae (strain ATCC 700721 / MGH 78578)</name>
    <dbReference type="NCBI Taxonomy" id="272620"/>
    <lineage>
        <taxon>Bacteria</taxon>
        <taxon>Pseudomonadati</taxon>
        <taxon>Pseudomonadota</taxon>
        <taxon>Gammaproteobacteria</taxon>
        <taxon>Enterobacterales</taxon>
        <taxon>Enterobacteriaceae</taxon>
        <taxon>Klebsiella/Raoultella group</taxon>
        <taxon>Klebsiella</taxon>
        <taxon>Klebsiella pneumoniae complex</taxon>
    </lineage>
</organism>
<protein>
    <recommendedName>
        <fullName evidence="1">DNA ligase B</fullName>
        <ecNumber evidence="1">6.5.1.2</ecNumber>
    </recommendedName>
    <alternativeName>
        <fullName evidence="1">Polydeoxyribonucleotide synthase [NAD(+)] B</fullName>
    </alternativeName>
</protein>
<keyword id="KW-0227">DNA damage</keyword>
<keyword id="KW-0234">DNA repair</keyword>
<keyword id="KW-0235">DNA replication</keyword>
<keyword id="KW-0436">Ligase</keyword>
<keyword id="KW-0520">NAD</keyword>
<name>LIGB_KLEP7</name>
<proteinExistence type="inferred from homology"/>